<keyword id="KW-1064">Adaptive immunity</keyword>
<keyword id="KW-0202">Cytokine</keyword>
<keyword id="KW-1015">Disulfide bond</keyword>
<keyword id="KW-0325">Glycoprotein</keyword>
<keyword id="KW-0339">Growth factor</keyword>
<keyword id="KW-0391">Immunity</keyword>
<keyword id="KW-0964">Secreted</keyword>
<keyword id="KW-0732">Signal</keyword>
<comment type="function">
    <text evidence="2">Cytokine produced by activated CD4-positive helper T-cells and to a lesser extend activated CD8-positive T-cells and natural killer (NK) cells that plays pivotal roles in the immune response and tolerance. Binds to a receptor complex composed of either the high-affinity trimeric IL-2R (IL2RA/CD25, IL2RB/CD122 and IL2RG/CD132) or the low-affinity dimeric IL-2R (IL2RB and IL2RG). Interaction with the receptor leads to oligomerization and conformation changes in the IL-2R subunits resulting in downstream signaling starting with phosphorylation of JAK1 and JAK3. In turn, JAK1 and JAK3 phosphorylate the receptor to form a docking site leading to the phosphorylation of several substrates including STAT5. This process leads to activation of several pathways including STAT, phosphoinositide-3-kinase/PI3K and mitogen-activated protein kinase/MAPK pathways. Functions as a T-cell growth factor and can increase NK-cell cytolytic activity as well. Promotes strong proliferation of activated B-cells and subsequently immunoglobulin production. Plays a pivotal role in regulating the adaptive immune system by controlling the survival and proliferation of regulatory T-cells, which are required for the maintenance of immune tolerance. Moreover, participates in the differentiation and homeostasis of effector T-cell subsets, including Th1, Th2, Th17 as well as memory CD8-positive T-cells.</text>
</comment>
<comment type="subcellular location">
    <subcellularLocation>
        <location evidence="1">Secreted</location>
    </subcellularLocation>
</comment>
<comment type="similarity">
    <text evidence="3">Belongs to the IL-2 family.</text>
</comment>
<sequence length="155" mass="17542">MYKIQLLSCIALTLALVANGAPTSSSTGNTMKEVKSLLLDLQLLLEKVKNPENLKLSRMHTFNFYVPKVNATELKHLKCLLEELKLLEEVLNLAPSKNLNPREIKDSMDNIKRIVLELQGSETGFTCEYDDATVKAVEFLNKWITFCQSIYSTMT</sequence>
<protein>
    <recommendedName>
        <fullName>Interleukin-2</fullName>
        <shortName>IL-2</shortName>
    </recommendedName>
    <alternativeName>
        <fullName>T-cell growth factor</fullName>
        <shortName>TCGF</shortName>
    </alternativeName>
</protein>
<dbReference type="EMBL" id="AB246271">
    <property type="protein sequence ID" value="BAE75848.1"/>
    <property type="molecule type" value="mRNA"/>
</dbReference>
<dbReference type="RefSeq" id="XP_055405861.1">
    <property type="nucleotide sequence ID" value="XM_055549886.1"/>
</dbReference>
<dbReference type="SMR" id="Q2PE78"/>
<dbReference type="GlyCosmos" id="Q2PE78">
    <property type="glycosylation" value="1 site, No reported glycans"/>
</dbReference>
<dbReference type="GeneID" id="129629707"/>
<dbReference type="GO" id="GO:0005615">
    <property type="term" value="C:extracellular space"/>
    <property type="evidence" value="ECO:0007669"/>
    <property type="project" value="UniProtKB-KW"/>
</dbReference>
<dbReference type="GO" id="GO:0005125">
    <property type="term" value="F:cytokine activity"/>
    <property type="evidence" value="ECO:0007669"/>
    <property type="project" value="UniProtKB-KW"/>
</dbReference>
<dbReference type="GO" id="GO:0008083">
    <property type="term" value="F:growth factor activity"/>
    <property type="evidence" value="ECO:0007669"/>
    <property type="project" value="UniProtKB-KW"/>
</dbReference>
<dbReference type="GO" id="GO:0005134">
    <property type="term" value="F:interleukin-2 receptor binding"/>
    <property type="evidence" value="ECO:0007669"/>
    <property type="project" value="InterPro"/>
</dbReference>
<dbReference type="GO" id="GO:0002250">
    <property type="term" value="P:adaptive immune response"/>
    <property type="evidence" value="ECO:0007669"/>
    <property type="project" value="UniProtKB-KW"/>
</dbReference>
<dbReference type="GO" id="GO:0009891">
    <property type="term" value="P:positive regulation of biosynthetic process"/>
    <property type="evidence" value="ECO:0007669"/>
    <property type="project" value="UniProtKB-ARBA"/>
</dbReference>
<dbReference type="Gene3D" id="1.20.1250.10">
    <property type="match status" value="1"/>
</dbReference>
<dbReference type="InterPro" id="IPR009079">
    <property type="entry name" value="4_helix_cytokine-like_core"/>
</dbReference>
<dbReference type="InterPro" id="IPR000779">
    <property type="entry name" value="IL-2"/>
</dbReference>
<dbReference type="InterPro" id="IPR030477">
    <property type="entry name" value="IL-2_CS"/>
</dbReference>
<dbReference type="PANTHER" id="PTHR48487">
    <property type="entry name" value="INTERLEUKIN-2"/>
    <property type="match status" value="1"/>
</dbReference>
<dbReference type="PANTHER" id="PTHR48487:SF1">
    <property type="entry name" value="INTERLEUKIN-2"/>
    <property type="match status" value="1"/>
</dbReference>
<dbReference type="Pfam" id="PF00715">
    <property type="entry name" value="IL2"/>
    <property type="match status" value="1"/>
</dbReference>
<dbReference type="PRINTS" id="PR00265">
    <property type="entry name" value="INTERLEUKIN2"/>
</dbReference>
<dbReference type="SMART" id="SM00189">
    <property type="entry name" value="IL2"/>
    <property type="match status" value="1"/>
</dbReference>
<dbReference type="SUPFAM" id="SSF47266">
    <property type="entry name" value="4-helical cytokines"/>
    <property type="match status" value="1"/>
</dbReference>
<dbReference type="PROSITE" id="PS00424">
    <property type="entry name" value="INTERLEUKIN_2"/>
    <property type="match status" value="1"/>
</dbReference>
<gene>
    <name type="primary">IL2</name>
</gene>
<proteinExistence type="evidence at transcript level"/>
<name>IL2_BUBCA</name>
<accession>Q2PE78</accession>
<evidence type="ECO:0000250" key="1"/>
<evidence type="ECO:0000250" key="2">
    <source>
        <dbReference type="UniProtKB" id="P60568"/>
    </source>
</evidence>
<evidence type="ECO:0000305" key="3"/>
<reference key="1">
    <citation type="journal article" date="2006" name="Vet. Immunol. Immunopathol.">
        <title>Comparative assessment of Th1 and Th2 cytokines of swamp type buffalo and other bubaline breeds by molecular cloning, sequencing and phylogenetics.</title>
        <authorList>
            <person name="Mingala C.N."/>
            <person name="Odbileg R."/>
            <person name="Konnai S."/>
            <person name="Ohashi K."/>
            <person name="Onuma M."/>
        </authorList>
    </citation>
    <scope>NUCLEOTIDE SEQUENCE [MRNA]</scope>
</reference>
<organism>
    <name type="scientific">Bubalus carabanensis</name>
    <name type="common">Swamp type water buffalo</name>
    <name type="synonym">Bubalus bubalis carabanensis</name>
    <dbReference type="NCBI Taxonomy" id="3119969"/>
    <lineage>
        <taxon>Eukaryota</taxon>
        <taxon>Metazoa</taxon>
        <taxon>Chordata</taxon>
        <taxon>Craniata</taxon>
        <taxon>Vertebrata</taxon>
        <taxon>Euteleostomi</taxon>
        <taxon>Mammalia</taxon>
        <taxon>Eutheria</taxon>
        <taxon>Laurasiatheria</taxon>
        <taxon>Artiodactyla</taxon>
        <taxon>Ruminantia</taxon>
        <taxon>Pecora</taxon>
        <taxon>Bovidae</taxon>
        <taxon>Bovinae</taxon>
        <taxon>Bubalus</taxon>
    </lineage>
</organism>
<feature type="signal peptide" evidence="1">
    <location>
        <begin position="1"/>
        <end position="20"/>
    </location>
</feature>
<feature type="chain" id="PRO_0000254892" description="Interleukin-2">
    <location>
        <begin position="21"/>
        <end position="155"/>
    </location>
</feature>
<feature type="glycosylation site" description="O-linked (GalNAc...) threonine" evidence="1">
    <location>
        <position position="23"/>
    </location>
</feature>
<feature type="disulfide bond" evidence="1">
    <location>
        <begin position="79"/>
        <end position="127"/>
    </location>
</feature>